<organism>
    <name type="scientific">Prochlorococcus marinus (strain MIT 9301)</name>
    <dbReference type="NCBI Taxonomy" id="167546"/>
    <lineage>
        <taxon>Bacteria</taxon>
        <taxon>Bacillati</taxon>
        <taxon>Cyanobacteriota</taxon>
        <taxon>Cyanophyceae</taxon>
        <taxon>Synechococcales</taxon>
        <taxon>Prochlorococcaceae</taxon>
        <taxon>Prochlorococcus</taxon>
    </lineage>
</organism>
<accession>A3PF22</accession>
<name>RL13_PROM0</name>
<sequence length="143" mass="16125">MNKTITPSLETIERNWFLVDAKDKTLGRLATEIATVLRGKNKPTFTPHLDTGDFVIVVNAEKVEVTGKKASQKLYRRHSGRPGGMKIEKFESLQERIPERIIEQAVKGMLPHNSLGRQQFKKLKVYKGADHPHAAQNPVLLNS</sequence>
<protein>
    <recommendedName>
        <fullName evidence="1">Large ribosomal subunit protein uL13</fullName>
    </recommendedName>
    <alternativeName>
        <fullName evidence="2">50S ribosomal protein L13</fullName>
    </alternativeName>
</protein>
<evidence type="ECO:0000255" key="1">
    <source>
        <dbReference type="HAMAP-Rule" id="MF_01366"/>
    </source>
</evidence>
<evidence type="ECO:0000305" key="2"/>
<feature type="chain" id="PRO_1000055434" description="Large ribosomal subunit protein uL13">
    <location>
        <begin position="1"/>
        <end position="143"/>
    </location>
</feature>
<gene>
    <name evidence="1" type="primary">rplM</name>
    <name evidence="1" type="synonym">rpl13</name>
    <name type="ordered locus">P9301_17241</name>
</gene>
<proteinExistence type="inferred from homology"/>
<reference key="1">
    <citation type="journal article" date="2007" name="PLoS Genet.">
        <title>Patterns and implications of gene gain and loss in the evolution of Prochlorococcus.</title>
        <authorList>
            <person name="Kettler G.C."/>
            <person name="Martiny A.C."/>
            <person name="Huang K."/>
            <person name="Zucker J."/>
            <person name="Coleman M.L."/>
            <person name="Rodrigue S."/>
            <person name="Chen F."/>
            <person name="Lapidus A."/>
            <person name="Ferriera S."/>
            <person name="Johnson J."/>
            <person name="Steglich C."/>
            <person name="Church G.M."/>
            <person name="Richardson P."/>
            <person name="Chisholm S.W."/>
        </authorList>
    </citation>
    <scope>NUCLEOTIDE SEQUENCE [LARGE SCALE GENOMIC DNA]</scope>
    <source>
        <strain>MIT 9301</strain>
    </source>
</reference>
<keyword id="KW-1185">Reference proteome</keyword>
<keyword id="KW-0687">Ribonucleoprotein</keyword>
<keyword id="KW-0689">Ribosomal protein</keyword>
<comment type="function">
    <text evidence="1">This protein is one of the early assembly proteins of the 50S ribosomal subunit, although it is not seen to bind rRNA by itself. It is important during the early stages of 50S assembly.</text>
</comment>
<comment type="subunit">
    <text evidence="1">Part of the 50S ribosomal subunit.</text>
</comment>
<comment type="similarity">
    <text evidence="1">Belongs to the universal ribosomal protein uL13 family.</text>
</comment>
<dbReference type="EMBL" id="CP000576">
    <property type="protein sequence ID" value="ABO18347.1"/>
    <property type="molecule type" value="Genomic_DNA"/>
</dbReference>
<dbReference type="RefSeq" id="WP_011863640.1">
    <property type="nucleotide sequence ID" value="NC_009091.1"/>
</dbReference>
<dbReference type="SMR" id="A3PF22"/>
<dbReference type="STRING" id="167546.P9301_17241"/>
<dbReference type="KEGG" id="pmg:P9301_17241"/>
<dbReference type="eggNOG" id="COG0102">
    <property type="taxonomic scope" value="Bacteria"/>
</dbReference>
<dbReference type="HOGENOM" id="CLU_082184_2_2_3"/>
<dbReference type="OrthoDB" id="9801330at2"/>
<dbReference type="Proteomes" id="UP000001430">
    <property type="component" value="Chromosome"/>
</dbReference>
<dbReference type="GO" id="GO:0022625">
    <property type="term" value="C:cytosolic large ribosomal subunit"/>
    <property type="evidence" value="ECO:0007669"/>
    <property type="project" value="TreeGrafter"/>
</dbReference>
<dbReference type="GO" id="GO:0003729">
    <property type="term" value="F:mRNA binding"/>
    <property type="evidence" value="ECO:0007669"/>
    <property type="project" value="TreeGrafter"/>
</dbReference>
<dbReference type="GO" id="GO:0003735">
    <property type="term" value="F:structural constituent of ribosome"/>
    <property type="evidence" value="ECO:0007669"/>
    <property type="project" value="InterPro"/>
</dbReference>
<dbReference type="GO" id="GO:0017148">
    <property type="term" value="P:negative regulation of translation"/>
    <property type="evidence" value="ECO:0007669"/>
    <property type="project" value="TreeGrafter"/>
</dbReference>
<dbReference type="GO" id="GO:0006412">
    <property type="term" value="P:translation"/>
    <property type="evidence" value="ECO:0007669"/>
    <property type="project" value="UniProtKB-UniRule"/>
</dbReference>
<dbReference type="CDD" id="cd00392">
    <property type="entry name" value="Ribosomal_L13"/>
    <property type="match status" value="1"/>
</dbReference>
<dbReference type="FunFam" id="3.90.1180.10:FF:000001">
    <property type="entry name" value="50S ribosomal protein L13"/>
    <property type="match status" value="1"/>
</dbReference>
<dbReference type="Gene3D" id="3.90.1180.10">
    <property type="entry name" value="Ribosomal protein L13"/>
    <property type="match status" value="1"/>
</dbReference>
<dbReference type="HAMAP" id="MF_01366">
    <property type="entry name" value="Ribosomal_uL13"/>
    <property type="match status" value="1"/>
</dbReference>
<dbReference type="InterPro" id="IPR005822">
    <property type="entry name" value="Ribosomal_uL13"/>
</dbReference>
<dbReference type="InterPro" id="IPR005823">
    <property type="entry name" value="Ribosomal_uL13_bac-type"/>
</dbReference>
<dbReference type="InterPro" id="IPR023563">
    <property type="entry name" value="Ribosomal_uL13_CS"/>
</dbReference>
<dbReference type="InterPro" id="IPR036899">
    <property type="entry name" value="Ribosomal_uL13_sf"/>
</dbReference>
<dbReference type="NCBIfam" id="TIGR01066">
    <property type="entry name" value="rplM_bact"/>
    <property type="match status" value="1"/>
</dbReference>
<dbReference type="PANTHER" id="PTHR11545:SF2">
    <property type="entry name" value="LARGE RIBOSOMAL SUBUNIT PROTEIN UL13M"/>
    <property type="match status" value="1"/>
</dbReference>
<dbReference type="PANTHER" id="PTHR11545">
    <property type="entry name" value="RIBOSOMAL PROTEIN L13"/>
    <property type="match status" value="1"/>
</dbReference>
<dbReference type="Pfam" id="PF00572">
    <property type="entry name" value="Ribosomal_L13"/>
    <property type="match status" value="1"/>
</dbReference>
<dbReference type="PIRSF" id="PIRSF002181">
    <property type="entry name" value="Ribosomal_L13"/>
    <property type="match status" value="1"/>
</dbReference>
<dbReference type="SUPFAM" id="SSF52161">
    <property type="entry name" value="Ribosomal protein L13"/>
    <property type="match status" value="1"/>
</dbReference>
<dbReference type="PROSITE" id="PS00783">
    <property type="entry name" value="RIBOSOMAL_L13"/>
    <property type="match status" value="1"/>
</dbReference>